<name>RAPA_ECO27</name>
<accession>B7UIA5</accession>
<dbReference type="EC" id="3.6.4.-" evidence="1"/>
<dbReference type="EMBL" id="FM180568">
    <property type="protein sequence ID" value="CAS07608.1"/>
    <property type="molecule type" value="Genomic_DNA"/>
</dbReference>
<dbReference type="RefSeq" id="WP_001117001.1">
    <property type="nucleotide sequence ID" value="NC_011601.1"/>
</dbReference>
<dbReference type="SMR" id="B7UIA5"/>
<dbReference type="KEGG" id="ecg:E2348C_0060"/>
<dbReference type="HOGENOM" id="CLU_011520_0_0_6"/>
<dbReference type="Proteomes" id="UP000008205">
    <property type="component" value="Chromosome"/>
</dbReference>
<dbReference type="GO" id="GO:0005524">
    <property type="term" value="F:ATP binding"/>
    <property type="evidence" value="ECO:0007669"/>
    <property type="project" value="UniProtKB-UniRule"/>
</dbReference>
<dbReference type="GO" id="GO:0003677">
    <property type="term" value="F:DNA binding"/>
    <property type="evidence" value="ECO:0007669"/>
    <property type="project" value="UniProtKB-KW"/>
</dbReference>
<dbReference type="GO" id="GO:0004386">
    <property type="term" value="F:helicase activity"/>
    <property type="evidence" value="ECO:0007669"/>
    <property type="project" value="UniProtKB-UniRule"/>
</dbReference>
<dbReference type="GO" id="GO:0016817">
    <property type="term" value="F:hydrolase activity, acting on acid anhydrides"/>
    <property type="evidence" value="ECO:0007669"/>
    <property type="project" value="InterPro"/>
</dbReference>
<dbReference type="GO" id="GO:0006355">
    <property type="term" value="P:regulation of DNA-templated transcription"/>
    <property type="evidence" value="ECO:0007669"/>
    <property type="project" value="UniProtKB-UniRule"/>
</dbReference>
<dbReference type="CDD" id="cd18011">
    <property type="entry name" value="DEXDc_RapA"/>
    <property type="match status" value="1"/>
</dbReference>
<dbReference type="CDD" id="cd18793">
    <property type="entry name" value="SF2_C_SNF"/>
    <property type="match status" value="1"/>
</dbReference>
<dbReference type="FunFam" id="2.30.30.140:FF:000020">
    <property type="entry name" value="RNA polymerase-associated protein RapA"/>
    <property type="match status" value="1"/>
</dbReference>
<dbReference type="FunFam" id="2.30.30.930:FF:000001">
    <property type="entry name" value="RNA polymerase-associated protein RapA"/>
    <property type="match status" value="1"/>
</dbReference>
<dbReference type="FunFam" id="3.30.360.80:FF:000001">
    <property type="entry name" value="RNA polymerase-associated protein RapA"/>
    <property type="match status" value="1"/>
</dbReference>
<dbReference type="FunFam" id="3.40.50.10810:FF:000012">
    <property type="entry name" value="RNA polymerase-associated protein RapA"/>
    <property type="match status" value="1"/>
</dbReference>
<dbReference type="FunFam" id="3.40.50.300:FF:000350">
    <property type="entry name" value="RNA polymerase-associated protein RapA"/>
    <property type="match status" value="1"/>
</dbReference>
<dbReference type="Gene3D" id="2.30.30.140">
    <property type="match status" value="1"/>
</dbReference>
<dbReference type="Gene3D" id="2.30.30.930">
    <property type="match status" value="1"/>
</dbReference>
<dbReference type="Gene3D" id="3.30.360.80">
    <property type="match status" value="1"/>
</dbReference>
<dbReference type="Gene3D" id="6.10.140.1500">
    <property type="match status" value="1"/>
</dbReference>
<dbReference type="Gene3D" id="6.10.140.2230">
    <property type="match status" value="1"/>
</dbReference>
<dbReference type="Gene3D" id="3.40.50.300">
    <property type="entry name" value="P-loop containing nucleotide triphosphate hydrolases"/>
    <property type="match status" value="1"/>
</dbReference>
<dbReference type="Gene3D" id="3.40.50.10810">
    <property type="entry name" value="Tandem AAA-ATPase domain"/>
    <property type="match status" value="1"/>
</dbReference>
<dbReference type="HAMAP" id="MF_01821">
    <property type="entry name" value="Helicase_RapA"/>
    <property type="match status" value="1"/>
</dbReference>
<dbReference type="InterPro" id="IPR014001">
    <property type="entry name" value="Helicase_ATP-bd"/>
</dbReference>
<dbReference type="InterPro" id="IPR001650">
    <property type="entry name" value="Helicase_C-like"/>
</dbReference>
<dbReference type="InterPro" id="IPR023949">
    <property type="entry name" value="Helicase_RapA"/>
</dbReference>
<dbReference type="InterPro" id="IPR027417">
    <property type="entry name" value="P-loop_NTPase"/>
</dbReference>
<dbReference type="InterPro" id="IPR022737">
    <property type="entry name" value="RapA_C"/>
</dbReference>
<dbReference type="InterPro" id="IPR038718">
    <property type="entry name" value="SNF2-like_sf"/>
</dbReference>
<dbReference type="InterPro" id="IPR049730">
    <property type="entry name" value="SNF2/RAD54-like_C"/>
</dbReference>
<dbReference type="InterPro" id="IPR000330">
    <property type="entry name" value="SNF2_N"/>
</dbReference>
<dbReference type="InterPro" id="IPR040765">
    <property type="entry name" value="Tudor_1_RapA"/>
</dbReference>
<dbReference type="InterPro" id="IPR040766">
    <property type="entry name" value="Tudor_2_RapA"/>
</dbReference>
<dbReference type="NCBIfam" id="NF003426">
    <property type="entry name" value="PRK04914.1"/>
    <property type="match status" value="1"/>
</dbReference>
<dbReference type="PANTHER" id="PTHR45766">
    <property type="entry name" value="DNA ANNEALING HELICASE AND ENDONUCLEASE ZRANB3 FAMILY MEMBER"/>
    <property type="match status" value="1"/>
</dbReference>
<dbReference type="PANTHER" id="PTHR45766:SF6">
    <property type="entry name" value="SWI_SNF-RELATED MATRIX-ASSOCIATED ACTIN-DEPENDENT REGULATOR OF CHROMATIN SUBFAMILY A-LIKE PROTEIN 1"/>
    <property type="match status" value="1"/>
</dbReference>
<dbReference type="Pfam" id="PF00271">
    <property type="entry name" value="Helicase_C"/>
    <property type="match status" value="1"/>
</dbReference>
<dbReference type="Pfam" id="PF12137">
    <property type="entry name" value="RapA_C"/>
    <property type="match status" value="1"/>
</dbReference>
<dbReference type="Pfam" id="PF00176">
    <property type="entry name" value="SNF2-rel_dom"/>
    <property type="match status" value="1"/>
</dbReference>
<dbReference type="Pfam" id="PF18339">
    <property type="entry name" value="Tudor_1_RapA"/>
    <property type="match status" value="1"/>
</dbReference>
<dbReference type="Pfam" id="PF18337">
    <property type="entry name" value="Tudor_RapA"/>
    <property type="match status" value="1"/>
</dbReference>
<dbReference type="SMART" id="SM00487">
    <property type="entry name" value="DEXDc"/>
    <property type="match status" value="1"/>
</dbReference>
<dbReference type="SMART" id="SM00490">
    <property type="entry name" value="HELICc"/>
    <property type="match status" value="1"/>
</dbReference>
<dbReference type="SUPFAM" id="SSF52540">
    <property type="entry name" value="P-loop containing nucleoside triphosphate hydrolases"/>
    <property type="match status" value="2"/>
</dbReference>
<dbReference type="PROSITE" id="PS51192">
    <property type="entry name" value="HELICASE_ATP_BIND_1"/>
    <property type="match status" value="1"/>
</dbReference>
<dbReference type="PROSITE" id="PS51194">
    <property type="entry name" value="HELICASE_CTER"/>
    <property type="match status" value="1"/>
</dbReference>
<comment type="function">
    <text evidence="1">Transcription regulator that activates transcription by stimulating RNA polymerase (RNAP) recycling in case of stress conditions such as supercoiled DNA or high salt concentrations. Probably acts by releasing the RNAP, when it is trapped or immobilized on tightly supercoiled DNA. Does not activate transcription on linear DNA. Probably not involved in DNA repair.</text>
</comment>
<comment type="subunit">
    <text evidence="1">Interacts with the RNAP. Has a higher affinity for the core RNAP than for the holoenzyme. Its ATPase activity is stimulated by binding to RNAP.</text>
</comment>
<comment type="similarity">
    <text evidence="1">Belongs to the SNF2/RAD54 helicase family. RapA subfamily.</text>
</comment>
<evidence type="ECO:0000255" key="1">
    <source>
        <dbReference type="HAMAP-Rule" id="MF_01821"/>
    </source>
</evidence>
<organism>
    <name type="scientific">Escherichia coli O127:H6 (strain E2348/69 / EPEC)</name>
    <dbReference type="NCBI Taxonomy" id="574521"/>
    <lineage>
        <taxon>Bacteria</taxon>
        <taxon>Pseudomonadati</taxon>
        <taxon>Pseudomonadota</taxon>
        <taxon>Gammaproteobacteria</taxon>
        <taxon>Enterobacterales</taxon>
        <taxon>Enterobacteriaceae</taxon>
        <taxon>Escherichia</taxon>
    </lineage>
</organism>
<keyword id="KW-0010">Activator</keyword>
<keyword id="KW-0067">ATP-binding</keyword>
<keyword id="KW-0238">DNA-binding</keyword>
<keyword id="KW-0347">Helicase</keyword>
<keyword id="KW-0378">Hydrolase</keyword>
<keyword id="KW-0547">Nucleotide-binding</keyword>
<keyword id="KW-1185">Reference proteome</keyword>
<keyword id="KW-0804">Transcription</keyword>
<keyword id="KW-0805">Transcription regulation</keyword>
<reference key="1">
    <citation type="journal article" date="2009" name="J. Bacteriol.">
        <title>Complete genome sequence and comparative genome analysis of enteropathogenic Escherichia coli O127:H6 strain E2348/69.</title>
        <authorList>
            <person name="Iguchi A."/>
            <person name="Thomson N.R."/>
            <person name="Ogura Y."/>
            <person name="Saunders D."/>
            <person name="Ooka T."/>
            <person name="Henderson I.R."/>
            <person name="Harris D."/>
            <person name="Asadulghani M."/>
            <person name="Kurokawa K."/>
            <person name="Dean P."/>
            <person name="Kenny B."/>
            <person name="Quail M.A."/>
            <person name="Thurston S."/>
            <person name="Dougan G."/>
            <person name="Hayashi T."/>
            <person name="Parkhill J."/>
            <person name="Frankel G."/>
        </authorList>
    </citation>
    <scope>NUCLEOTIDE SEQUENCE [LARGE SCALE GENOMIC DNA]</scope>
    <source>
        <strain>E2348/69 / EPEC</strain>
    </source>
</reference>
<proteinExistence type="inferred from homology"/>
<feature type="chain" id="PRO_1000188168" description="RNA polymerase-associated protein RapA">
    <location>
        <begin position="1"/>
        <end position="968"/>
    </location>
</feature>
<feature type="domain" description="Helicase ATP-binding" evidence="1">
    <location>
        <begin position="164"/>
        <end position="334"/>
    </location>
</feature>
<feature type="domain" description="Helicase C-terminal" evidence="1">
    <location>
        <begin position="490"/>
        <end position="662"/>
    </location>
</feature>
<feature type="short sequence motif" description="DEAH box">
    <location>
        <begin position="280"/>
        <end position="283"/>
    </location>
</feature>
<feature type="binding site" evidence="1">
    <location>
        <begin position="177"/>
        <end position="184"/>
    </location>
    <ligand>
        <name>ATP</name>
        <dbReference type="ChEBI" id="CHEBI:30616"/>
    </ligand>
</feature>
<gene>
    <name evidence="1" type="primary">rapA</name>
    <name type="ordered locus">E2348C_0060</name>
</gene>
<sequence length="968" mass="109770">MPFTLGQRWISDTESELGLGTVVAVDARTVTLLFPSTGENRLYARSDSPVTRVMFNPGDTITSHDGWQMQVEEVKEENGLLTYIGTRLDTEESGVALREVFLDSKLVFSKPQDRLFAGQIDRMDRFALRYRARKYSSEQFRMPYSGLRGQRTSLIPHQLNIAHDVGRRHAPRVLLADEVGLGKTIEAGMILHQQLLSGAAERVLIIVPETLQHQWLVEMLRRFNLRFALFDDERYAEAQHDAYNPFDTEQLVICSLDFARRSKQRLEHLCEAEWDLLVVDEAHHLVWSEDAPSREYQAIEQLAEHVPGVLLLTATPEQLGMESHFARLRLLDPNRFHDFAQFVEEQKNYRPVADAVAMLLAGNKLSNDELNMLGEMIGEQDIEPLLQAANSDSEDAQSARQELVSMLMDRHGTSRVLFRNTRNGVKGFPKRELHTIKLPLPTQYQTAIKVSGIMGARKSAEDRARDMLYPERIYQEFEGDNATWWNFDPRVEWLMGYLTSHRSQKVLVICAKAATALQLEQVLREREGIRAAVFHEGMSIIERDRAAAWFAEEDTGAQVLLCSEIGSEGRNFQFASHMVMFDLPFNPDLLEQRIGRLDRIGQAHDIQIHVPYLEKTAQSVLVRWYHEGLDAFEHTCPTGRTIYDSVYNDLINYLASPDETEGFDDLIKNCREQHEALKAQLEQGRDRLLEIHSNGGEKAQALAESIEEQDDDTNLIAFAMNLFDIIGINQDDRGDNMIVLTPSDHMLVPDFPGLSEDGITITFDREVALAREDAQFITWEHPLIRNGLDLILSGDTGSSTISLLKNKALPVGTLLVELIYVVEAQAPKQLQLNRFLPPTPVRMLLDKNGNNLAAQVEFETFNRQLNAVNRHTGSKLVNAVQQDVHAILQLGEAQIEKSARALIDAARNEADEKLSAELSRLEALRAVNPNIRDDELTAIESNRQQVMESLDQAGWRLDALRLIVVTHQ</sequence>
<protein>
    <recommendedName>
        <fullName evidence="1">RNA polymerase-associated protein RapA</fullName>
        <ecNumber evidence="1">3.6.4.-</ecNumber>
    </recommendedName>
    <alternativeName>
        <fullName evidence="1">ATP-dependent helicase HepA</fullName>
    </alternativeName>
</protein>